<reference key="1">
    <citation type="journal article" date="2007" name="Archaea">
        <title>The genome of Hyperthermus butylicus: a sulfur-reducing, peptide fermenting, neutrophilic Crenarchaeote growing up to 108 degrees C.</title>
        <authorList>
            <person name="Bruegger K."/>
            <person name="Chen L."/>
            <person name="Stark M."/>
            <person name="Zibat A."/>
            <person name="Redder P."/>
            <person name="Ruepp A."/>
            <person name="Awayez M."/>
            <person name="She Q."/>
            <person name="Garrett R.A."/>
            <person name="Klenk H.-P."/>
        </authorList>
    </citation>
    <scope>NUCLEOTIDE SEQUENCE [LARGE SCALE GENOMIC DNA]</scope>
    <source>
        <strain>DSM 5456 / JCM 9403 / PLM1-5</strain>
    </source>
</reference>
<accession>A2BLF3</accession>
<gene>
    <name evidence="1" type="primary">thrS</name>
    <name type="ordered locus">Hbut_0966</name>
</gene>
<organism>
    <name type="scientific">Hyperthermus butylicus (strain DSM 5456 / JCM 9403 / PLM1-5)</name>
    <dbReference type="NCBI Taxonomy" id="415426"/>
    <lineage>
        <taxon>Archaea</taxon>
        <taxon>Thermoproteota</taxon>
        <taxon>Thermoprotei</taxon>
        <taxon>Desulfurococcales</taxon>
        <taxon>Pyrodictiaceae</taxon>
        <taxon>Hyperthermus</taxon>
    </lineage>
</organism>
<dbReference type="EC" id="6.1.1.3" evidence="1"/>
<dbReference type="EMBL" id="CP000493">
    <property type="protein sequence ID" value="ABM80814.1"/>
    <property type="molecule type" value="Genomic_DNA"/>
</dbReference>
<dbReference type="SMR" id="A2BLF3"/>
<dbReference type="STRING" id="415426.Hbut_0966"/>
<dbReference type="EnsemblBacteria" id="ABM80814">
    <property type="protein sequence ID" value="ABM80814"/>
    <property type="gene ID" value="Hbut_0966"/>
</dbReference>
<dbReference type="KEGG" id="hbu:Hbut_0966"/>
<dbReference type="eggNOG" id="arCOG00401">
    <property type="taxonomic scope" value="Archaea"/>
</dbReference>
<dbReference type="HOGENOM" id="CLU_029833_0_0_2"/>
<dbReference type="OrthoDB" id="372136at2157"/>
<dbReference type="Proteomes" id="UP000002593">
    <property type="component" value="Chromosome"/>
</dbReference>
<dbReference type="GO" id="GO:0005737">
    <property type="term" value="C:cytoplasm"/>
    <property type="evidence" value="ECO:0007669"/>
    <property type="project" value="UniProtKB-SubCell"/>
</dbReference>
<dbReference type="GO" id="GO:0005524">
    <property type="term" value="F:ATP binding"/>
    <property type="evidence" value="ECO:0007669"/>
    <property type="project" value="UniProtKB-UniRule"/>
</dbReference>
<dbReference type="GO" id="GO:0004829">
    <property type="term" value="F:threonine-tRNA ligase activity"/>
    <property type="evidence" value="ECO:0007669"/>
    <property type="project" value="UniProtKB-UniRule"/>
</dbReference>
<dbReference type="GO" id="GO:0000049">
    <property type="term" value="F:tRNA binding"/>
    <property type="evidence" value="ECO:0007669"/>
    <property type="project" value="UniProtKB-KW"/>
</dbReference>
<dbReference type="GO" id="GO:0008270">
    <property type="term" value="F:zinc ion binding"/>
    <property type="evidence" value="ECO:0007669"/>
    <property type="project" value="InterPro"/>
</dbReference>
<dbReference type="GO" id="GO:0006435">
    <property type="term" value="P:threonyl-tRNA aminoacylation"/>
    <property type="evidence" value="ECO:0007669"/>
    <property type="project" value="UniProtKB-UniRule"/>
</dbReference>
<dbReference type="CDD" id="cd00860">
    <property type="entry name" value="ThrRS_anticodon"/>
    <property type="match status" value="1"/>
</dbReference>
<dbReference type="FunFam" id="3.40.50.800:FF:000001">
    <property type="entry name" value="Threonine--tRNA ligase"/>
    <property type="match status" value="1"/>
</dbReference>
<dbReference type="Gene3D" id="3.40.50.800">
    <property type="entry name" value="Anticodon-binding domain"/>
    <property type="match status" value="1"/>
</dbReference>
<dbReference type="Gene3D" id="3.30.930.10">
    <property type="entry name" value="Bira Bifunctional Protein, Domain 2"/>
    <property type="match status" value="1"/>
</dbReference>
<dbReference type="Gene3D" id="3.50.80.10">
    <property type="entry name" value="D-tyrosyl-tRNA(Tyr) deacylase"/>
    <property type="match status" value="1"/>
</dbReference>
<dbReference type="HAMAP" id="MF_00184">
    <property type="entry name" value="Thr_tRNA_synth"/>
    <property type="match status" value="1"/>
</dbReference>
<dbReference type="InterPro" id="IPR002314">
    <property type="entry name" value="aa-tRNA-synt_IIb"/>
</dbReference>
<dbReference type="InterPro" id="IPR006195">
    <property type="entry name" value="aa-tRNA-synth_II"/>
</dbReference>
<dbReference type="InterPro" id="IPR045864">
    <property type="entry name" value="aa-tRNA-synth_II/BPL/LPL"/>
</dbReference>
<dbReference type="InterPro" id="IPR004154">
    <property type="entry name" value="Anticodon-bd"/>
</dbReference>
<dbReference type="InterPro" id="IPR036621">
    <property type="entry name" value="Anticodon-bd_dom_sf"/>
</dbReference>
<dbReference type="InterPro" id="IPR023509">
    <property type="entry name" value="DTD-like_sf"/>
</dbReference>
<dbReference type="InterPro" id="IPR002320">
    <property type="entry name" value="Thr-tRNA-ligase_IIa"/>
</dbReference>
<dbReference type="InterPro" id="IPR015011">
    <property type="entry name" value="Threonyl-tRNA_syn_edit_dom_arc"/>
</dbReference>
<dbReference type="InterPro" id="IPR047246">
    <property type="entry name" value="ThrRS_anticodon"/>
</dbReference>
<dbReference type="NCBIfam" id="NF003068">
    <property type="entry name" value="PRK03991.1"/>
    <property type="match status" value="1"/>
</dbReference>
<dbReference type="PANTHER" id="PTHR11451:SF44">
    <property type="entry name" value="THREONINE--TRNA LIGASE, CHLOROPLASTIC_MITOCHONDRIAL 2"/>
    <property type="match status" value="1"/>
</dbReference>
<dbReference type="PANTHER" id="PTHR11451">
    <property type="entry name" value="THREONINE-TRNA LIGASE"/>
    <property type="match status" value="1"/>
</dbReference>
<dbReference type="Pfam" id="PF03129">
    <property type="entry name" value="HGTP_anticodon"/>
    <property type="match status" value="1"/>
</dbReference>
<dbReference type="Pfam" id="PF00587">
    <property type="entry name" value="tRNA-synt_2b"/>
    <property type="match status" value="1"/>
</dbReference>
<dbReference type="Pfam" id="PF08915">
    <property type="entry name" value="tRNA-Thr_ED"/>
    <property type="match status" value="1"/>
</dbReference>
<dbReference type="PRINTS" id="PR01047">
    <property type="entry name" value="TRNASYNTHTHR"/>
</dbReference>
<dbReference type="SUPFAM" id="SSF52954">
    <property type="entry name" value="Class II aaRS ABD-related"/>
    <property type="match status" value="1"/>
</dbReference>
<dbReference type="SUPFAM" id="SSF55681">
    <property type="entry name" value="Class II aaRS and biotin synthetases"/>
    <property type="match status" value="1"/>
</dbReference>
<dbReference type="PROSITE" id="PS50862">
    <property type="entry name" value="AA_TRNA_LIGASE_II"/>
    <property type="match status" value="1"/>
</dbReference>
<protein>
    <recommendedName>
        <fullName evidence="1">Threonine--tRNA ligase</fullName>
        <ecNumber evidence="1">6.1.1.3</ecNumber>
    </recommendedName>
    <alternativeName>
        <fullName evidence="1">Threonyl-tRNA synthetase</fullName>
        <shortName evidence="1">ThrRS</shortName>
    </alternativeName>
</protein>
<comment type="function">
    <text evidence="1">Catalyzes the attachment of threonine to tRNA(Thr) in a two-step reaction: L-threonine is first activated by ATP to form Thr-AMP and then transferred to the acceptor end of tRNA(Thr). Also edits incorrectly charged L-seryl-tRNA(Thr).</text>
</comment>
<comment type="catalytic activity">
    <reaction evidence="1">
        <text>tRNA(Thr) + L-threonine + ATP = L-threonyl-tRNA(Thr) + AMP + diphosphate + H(+)</text>
        <dbReference type="Rhea" id="RHEA:24624"/>
        <dbReference type="Rhea" id="RHEA-COMP:9670"/>
        <dbReference type="Rhea" id="RHEA-COMP:9704"/>
        <dbReference type="ChEBI" id="CHEBI:15378"/>
        <dbReference type="ChEBI" id="CHEBI:30616"/>
        <dbReference type="ChEBI" id="CHEBI:33019"/>
        <dbReference type="ChEBI" id="CHEBI:57926"/>
        <dbReference type="ChEBI" id="CHEBI:78442"/>
        <dbReference type="ChEBI" id="CHEBI:78534"/>
        <dbReference type="ChEBI" id="CHEBI:456215"/>
        <dbReference type="EC" id="6.1.1.3"/>
    </reaction>
</comment>
<comment type="cofactor">
    <cofactor evidence="1">
        <name>Zn(2+)</name>
        <dbReference type="ChEBI" id="CHEBI:29105"/>
    </cofactor>
    <text evidence="1">Binds 1 zinc ion per subunit.</text>
</comment>
<comment type="subunit">
    <text evidence="1">Homodimer.</text>
</comment>
<comment type="subcellular location">
    <subcellularLocation>
        <location evidence="1">Cytoplasm</location>
    </subcellularLocation>
</comment>
<comment type="domain">
    <text evidence="1">The N-terminal domain is an archaea-specific tRNA-editing domain that hydrolyzes incorrectly charged L-seryl-tRNA(Thr). Catalysis of tRNA editing is performed by the charged tRNA itself.</text>
</comment>
<comment type="similarity">
    <text evidence="1">Belongs to the class-II aminoacyl-tRNA synthetase family.</text>
</comment>
<sequence>MRVLLIHAKRFIYRTRMKAIPEAEDINGVQGEGSFENALVVFTTVESRDTSNPKEVVETAAKDIVEIASKVGAKTIVVYPYAHLSQKLAPPHQAKNILAMLELEIKKLASDKFEVSRAPFGWYKEFELHCHGHPLSELSRNYEAKTTARVEVKKKYYVLTPEGEVYSPEEFLEKASPEFRAVIEKEALGKEIGGVENPVNKLCAKFGFEWEPLSDYGHMRYEPHATLMIEAVGEYAWILARSLTIPVLKVKGTNMFDLAEKPVYEHAALFGDRLYELWADKKHLVMRYAACHQQFSMLKDYVLSYRDLPLGMFEIADSYRLEQSGEVTLCFRLRRFYMPDLHILARSVEEAVKIAEELQKIIHREAEKLGQTYYAVYNVTEDFWEEKRNLLLELVRRDGKPALITVYPAGIYYWVVNVEYHIVDSAGRPREIATFQFDVGNAKRFGIRYVDENNKEHYPVIIHTALIGSIERYIYMVFDAAVKMERRGQTPYIPTWLAPIQVRLIPVNPSSEQQLSHAEKVASLLERHLIRVDIDDRQLSLGRRIRDAAREWIPYIAVIGDREVETGTVNVTIRRTNDRVAVKPEELLEMVLKDLEGYPRVQSTLPRYVSKRPTLVYLEKEVALE</sequence>
<evidence type="ECO:0000255" key="1">
    <source>
        <dbReference type="HAMAP-Rule" id="MF_00184"/>
    </source>
</evidence>
<keyword id="KW-0030">Aminoacyl-tRNA synthetase</keyword>
<keyword id="KW-0067">ATP-binding</keyword>
<keyword id="KW-0963">Cytoplasm</keyword>
<keyword id="KW-0436">Ligase</keyword>
<keyword id="KW-0479">Metal-binding</keyword>
<keyword id="KW-0547">Nucleotide-binding</keyword>
<keyword id="KW-0648">Protein biosynthesis</keyword>
<keyword id="KW-1185">Reference proteome</keyword>
<keyword id="KW-0694">RNA-binding</keyword>
<keyword id="KW-0820">tRNA-binding</keyword>
<keyword id="KW-0862">Zinc</keyword>
<feature type="chain" id="PRO_1000020407" description="Threonine--tRNA ligase">
    <location>
        <begin position="1"/>
        <end position="625"/>
    </location>
</feature>
<feature type="region of interest" description="Editing domain" evidence="1">
    <location>
        <begin position="1"/>
        <end position="149"/>
    </location>
</feature>
<feature type="region of interest" description="Catalytic" evidence="1">
    <location>
        <begin position="197"/>
        <end position="494"/>
    </location>
</feature>
<feature type="region of interest" description="Catalytic">
    <location>
        <begin position="198"/>
        <end position="494"/>
    </location>
</feature>
<feature type="binding site" evidence="1">
    <location>
        <position position="291"/>
    </location>
    <ligand>
        <name>Zn(2+)</name>
        <dbReference type="ChEBI" id="CHEBI:29105"/>
    </ligand>
</feature>
<feature type="binding site" evidence="1">
    <location>
        <position position="342"/>
    </location>
    <ligand>
        <name>Zn(2+)</name>
        <dbReference type="ChEBI" id="CHEBI:29105"/>
    </ligand>
</feature>
<feature type="binding site" evidence="1">
    <location>
        <position position="463"/>
    </location>
    <ligand>
        <name>Zn(2+)</name>
        <dbReference type="ChEBI" id="CHEBI:29105"/>
    </ligand>
</feature>
<name>SYT_HYPBU</name>
<proteinExistence type="inferred from homology"/>